<feature type="chain" id="PRO_1000099861" description="Anthranilate phosphoribosyltransferase">
    <location>
        <begin position="1"/>
        <end position="332"/>
    </location>
</feature>
<feature type="binding site" evidence="1">
    <location>
        <position position="79"/>
    </location>
    <ligand>
        <name>5-phospho-alpha-D-ribose 1-diphosphate</name>
        <dbReference type="ChEBI" id="CHEBI:58017"/>
    </ligand>
</feature>
<feature type="binding site" evidence="1">
    <location>
        <position position="79"/>
    </location>
    <ligand>
        <name>anthranilate</name>
        <dbReference type="ChEBI" id="CHEBI:16567"/>
        <label>1</label>
    </ligand>
</feature>
<feature type="binding site" evidence="1">
    <location>
        <begin position="82"/>
        <end position="83"/>
    </location>
    <ligand>
        <name>5-phospho-alpha-D-ribose 1-diphosphate</name>
        <dbReference type="ChEBI" id="CHEBI:58017"/>
    </ligand>
</feature>
<feature type="binding site" evidence="1">
    <location>
        <position position="87"/>
    </location>
    <ligand>
        <name>5-phospho-alpha-D-ribose 1-diphosphate</name>
        <dbReference type="ChEBI" id="CHEBI:58017"/>
    </ligand>
</feature>
<feature type="binding site" evidence="1">
    <location>
        <begin position="89"/>
        <end position="92"/>
    </location>
    <ligand>
        <name>5-phospho-alpha-D-ribose 1-diphosphate</name>
        <dbReference type="ChEBI" id="CHEBI:58017"/>
    </ligand>
</feature>
<feature type="binding site" evidence="1">
    <location>
        <position position="91"/>
    </location>
    <ligand>
        <name>Mg(2+)</name>
        <dbReference type="ChEBI" id="CHEBI:18420"/>
        <label>1</label>
    </ligand>
</feature>
<feature type="binding site" evidence="1">
    <location>
        <begin position="107"/>
        <end position="115"/>
    </location>
    <ligand>
        <name>5-phospho-alpha-D-ribose 1-diphosphate</name>
        <dbReference type="ChEBI" id="CHEBI:58017"/>
    </ligand>
</feature>
<feature type="binding site" evidence="1">
    <location>
        <position position="110"/>
    </location>
    <ligand>
        <name>anthranilate</name>
        <dbReference type="ChEBI" id="CHEBI:16567"/>
        <label>1</label>
    </ligand>
</feature>
<feature type="binding site" evidence="1">
    <location>
        <position position="119"/>
    </location>
    <ligand>
        <name>5-phospho-alpha-D-ribose 1-diphosphate</name>
        <dbReference type="ChEBI" id="CHEBI:58017"/>
    </ligand>
</feature>
<feature type="binding site" evidence="1">
    <location>
        <position position="165"/>
    </location>
    <ligand>
        <name>anthranilate</name>
        <dbReference type="ChEBI" id="CHEBI:16567"/>
        <label>2</label>
    </ligand>
</feature>
<feature type="binding site" evidence="1">
    <location>
        <position position="223"/>
    </location>
    <ligand>
        <name>Mg(2+)</name>
        <dbReference type="ChEBI" id="CHEBI:18420"/>
        <label>2</label>
    </ligand>
</feature>
<feature type="binding site" evidence="1">
    <location>
        <position position="224"/>
    </location>
    <ligand>
        <name>Mg(2+)</name>
        <dbReference type="ChEBI" id="CHEBI:18420"/>
        <label>1</label>
    </ligand>
</feature>
<feature type="binding site" evidence="1">
    <location>
        <position position="224"/>
    </location>
    <ligand>
        <name>Mg(2+)</name>
        <dbReference type="ChEBI" id="CHEBI:18420"/>
        <label>2</label>
    </ligand>
</feature>
<gene>
    <name evidence="1" type="primary">trpD</name>
    <name type="ordered locus">YPTS_2199</name>
</gene>
<proteinExistence type="inferred from homology"/>
<accession>B2K3W4</accession>
<protein>
    <recommendedName>
        <fullName evidence="1">Anthranilate phosphoribosyltransferase</fullName>
        <ecNumber evidence="1">2.4.2.18</ecNumber>
    </recommendedName>
</protein>
<dbReference type="EC" id="2.4.2.18" evidence="1"/>
<dbReference type="EMBL" id="CP001048">
    <property type="protein sequence ID" value="ACC89160.1"/>
    <property type="molecule type" value="Genomic_DNA"/>
</dbReference>
<dbReference type="SMR" id="B2K3W4"/>
<dbReference type="KEGG" id="ypb:YPTS_2199"/>
<dbReference type="PATRIC" id="fig|502801.10.peg.1588"/>
<dbReference type="UniPathway" id="UPA00035">
    <property type="reaction ID" value="UER00041"/>
</dbReference>
<dbReference type="GO" id="GO:0005829">
    <property type="term" value="C:cytosol"/>
    <property type="evidence" value="ECO:0007669"/>
    <property type="project" value="TreeGrafter"/>
</dbReference>
<dbReference type="GO" id="GO:0004048">
    <property type="term" value="F:anthranilate phosphoribosyltransferase activity"/>
    <property type="evidence" value="ECO:0007669"/>
    <property type="project" value="UniProtKB-UniRule"/>
</dbReference>
<dbReference type="GO" id="GO:0000287">
    <property type="term" value="F:magnesium ion binding"/>
    <property type="evidence" value="ECO:0007669"/>
    <property type="project" value="UniProtKB-UniRule"/>
</dbReference>
<dbReference type="GO" id="GO:0000162">
    <property type="term" value="P:L-tryptophan biosynthetic process"/>
    <property type="evidence" value="ECO:0007669"/>
    <property type="project" value="UniProtKB-UniRule"/>
</dbReference>
<dbReference type="FunFam" id="1.20.970.10:FF:000003">
    <property type="entry name" value="Anthranilate phosphoribosyltransferase"/>
    <property type="match status" value="1"/>
</dbReference>
<dbReference type="FunFam" id="3.40.1030.10:FF:000002">
    <property type="entry name" value="Anthranilate phosphoribosyltransferase"/>
    <property type="match status" value="1"/>
</dbReference>
<dbReference type="Gene3D" id="3.40.1030.10">
    <property type="entry name" value="Nucleoside phosphorylase/phosphoribosyltransferase catalytic domain"/>
    <property type="match status" value="1"/>
</dbReference>
<dbReference type="Gene3D" id="1.20.970.10">
    <property type="entry name" value="Transferase, Pyrimidine Nucleoside Phosphorylase, Chain C"/>
    <property type="match status" value="1"/>
</dbReference>
<dbReference type="HAMAP" id="MF_00211">
    <property type="entry name" value="TrpD"/>
    <property type="match status" value="1"/>
</dbReference>
<dbReference type="InterPro" id="IPR005940">
    <property type="entry name" value="Anthranilate_Pribosyl_Tfrase"/>
</dbReference>
<dbReference type="InterPro" id="IPR000312">
    <property type="entry name" value="Glycosyl_Trfase_fam3"/>
</dbReference>
<dbReference type="InterPro" id="IPR017459">
    <property type="entry name" value="Glycosyl_Trfase_fam3_N_dom"/>
</dbReference>
<dbReference type="InterPro" id="IPR036320">
    <property type="entry name" value="Glycosyl_Trfase_fam3_N_dom_sf"/>
</dbReference>
<dbReference type="InterPro" id="IPR035902">
    <property type="entry name" value="Nuc_phospho_transferase"/>
</dbReference>
<dbReference type="NCBIfam" id="TIGR01245">
    <property type="entry name" value="trpD"/>
    <property type="match status" value="1"/>
</dbReference>
<dbReference type="PANTHER" id="PTHR43285">
    <property type="entry name" value="ANTHRANILATE PHOSPHORIBOSYLTRANSFERASE"/>
    <property type="match status" value="1"/>
</dbReference>
<dbReference type="PANTHER" id="PTHR43285:SF2">
    <property type="entry name" value="ANTHRANILATE PHOSPHORIBOSYLTRANSFERASE"/>
    <property type="match status" value="1"/>
</dbReference>
<dbReference type="Pfam" id="PF02885">
    <property type="entry name" value="Glycos_trans_3N"/>
    <property type="match status" value="1"/>
</dbReference>
<dbReference type="Pfam" id="PF00591">
    <property type="entry name" value="Glycos_transf_3"/>
    <property type="match status" value="1"/>
</dbReference>
<dbReference type="SUPFAM" id="SSF52418">
    <property type="entry name" value="Nucleoside phosphorylase/phosphoribosyltransferase catalytic domain"/>
    <property type="match status" value="1"/>
</dbReference>
<dbReference type="SUPFAM" id="SSF47648">
    <property type="entry name" value="Nucleoside phosphorylase/phosphoribosyltransferase N-terminal domain"/>
    <property type="match status" value="1"/>
</dbReference>
<name>TRPD_YERPB</name>
<keyword id="KW-0028">Amino-acid biosynthesis</keyword>
<keyword id="KW-0057">Aromatic amino acid biosynthesis</keyword>
<keyword id="KW-0328">Glycosyltransferase</keyword>
<keyword id="KW-0460">Magnesium</keyword>
<keyword id="KW-0479">Metal-binding</keyword>
<keyword id="KW-0808">Transferase</keyword>
<keyword id="KW-0822">Tryptophan biosynthesis</keyword>
<comment type="function">
    <text evidence="1">Catalyzes the transfer of the phosphoribosyl group of 5-phosphorylribose-1-pyrophosphate (PRPP) to anthranilate to yield N-(5'-phosphoribosyl)-anthranilate (PRA).</text>
</comment>
<comment type="catalytic activity">
    <reaction evidence="1">
        <text>N-(5-phospho-beta-D-ribosyl)anthranilate + diphosphate = 5-phospho-alpha-D-ribose 1-diphosphate + anthranilate</text>
        <dbReference type="Rhea" id="RHEA:11768"/>
        <dbReference type="ChEBI" id="CHEBI:16567"/>
        <dbReference type="ChEBI" id="CHEBI:18277"/>
        <dbReference type="ChEBI" id="CHEBI:33019"/>
        <dbReference type="ChEBI" id="CHEBI:58017"/>
        <dbReference type="EC" id="2.4.2.18"/>
    </reaction>
</comment>
<comment type="cofactor">
    <cofactor evidence="1">
        <name>Mg(2+)</name>
        <dbReference type="ChEBI" id="CHEBI:18420"/>
    </cofactor>
    <text evidence="1">Binds 2 magnesium ions per monomer.</text>
</comment>
<comment type="pathway">
    <text evidence="1">Amino-acid biosynthesis; L-tryptophan biosynthesis; L-tryptophan from chorismate: step 2/5.</text>
</comment>
<comment type="subunit">
    <text evidence="1">Homodimer.</text>
</comment>
<comment type="similarity">
    <text evidence="1">Belongs to the anthranilate phosphoribosyltransferase family.</text>
</comment>
<organism>
    <name type="scientific">Yersinia pseudotuberculosis serotype IB (strain PB1/+)</name>
    <dbReference type="NCBI Taxonomy" id="502801"/>
    <lineage>
        <taxon>Bacteria</taxon>
        <taxon>Pseudomonadati</taxon>
        <taxon>Pseudomonadota</taxon>
        <taxon>Gammaproteobacteria</taxon>
        <taxon>Enterobacterales</taxon>
        <taxon>Yersiniaceae</taxon>
        <taxon>Yersinia</taxon>
    </lineage>
</organism>
<reference key="1">
    <citation type="submission" date="2008-04" db="EMBL/GenBank/DDBJ databases">
        <title>Complete sequence of Yersinia pseudotuberculosis PB1/+.</title>
        <authorList>
            <person name="Copeland A."/>
            <person name="Lucas S."/>
            <person name="Lapidus A."/>
            <person name="Glavina del Rio T."/>
            <person name="Dalin E."/>
            <person name="Tice H."/>
            <person name="Bruce D."/>
            <person name="Goodwin L."/>
            <person name="Pitluck S."/>
            <person name="Munk A.C."/>
            <person name="Brettin T."/>
            <person name="Detter J.C."/>
            <person name="Han C."/>
            <person name="Tapia R."/>
            <person name="Schmutz J."/>
            <person name="Larimer F."/>
            <person name="Land M."/>
            <person name="Hauser L."/>
            <person name="Challacombe J.F."/>
            <person name="Green L."/>
            <person name="Lindler L.E."/>
            <person name="Nikolich M.P."/>
            <person name="Richardson P."/>
        </authorList>
    </citation>
    <scope>NUCLEOTIDE SEQUENCE [LARGE SCALE GENOMIC DNA]</scope>
    <source>
        <strain>PB1/+</strain>
    </source>
</reference>
<sequence length="332" mass="35499">MQHLFEKLFRAESMSQEESQQLFAAIVRGELEPSQLAAVLISMKVRGETPAEIAGAAQALLADAQHFPRPDYLFADIVGTGGDGTNSINISTASAFVAASCGVKVAKHGNRSVSSRSGSSDLLAAFGIRLDMSAEQSRLALDDLGVCFLFAPQYHTGFRHAMPVRQQLKTRTLFNVLGPLINPARPPLALIGVYSPELVLPIAQTLKVLGYQRAAVVHGGGMDEVAIHAPTQVAELNNGSIESYQLTPEDFGLNRYPLAALQGGMPEENRDILARLLQGKGETAHAAAVAANVALLLKLYGQENLRHNAQQALEMIHSGQAFDRVTALAARG</sequence>
<evidence type="ECO:0000255" key="1">
    <source>
        <dbReference type="HAMAP-Rule" id="MF_00211"/>
    </source>
</evidence>